<proteinExistence type="evidence at transcript level"/>
<reference key="1">
    <citation type="journal article" date="2003" name="Plant Physiol.">
        <title>Identification and characterization of the ARIADNE gene family in Arabidopsis. A group of putative E3 ligases.</title>
        <authorList>
            <person name="Mladek C."/>
            <person name="Guger K."/>
            <person name="Hauser M.-T."/>
        </authorList>
    </citation>
    <scope>NUCLEOTIDE SEQUENCE [GENOMIC DNA]</scope>
    <scope>NOMENCLATURE</scope>
    <scope>GENE FAMILY</scope>
    <source>
        <strain>cv. Columbia</strain>
    </source>
</reference>
<reference key="2">
    <citation type="journal article" date="1999" name="Nature">
        <title>Sequence and analysis of chromosome 2 of the plant Arabidopsis thaliana.</title>
        <authorList>
            <person name="Lin X."/>
            <person name="Kaul S."/>
            <person name="Rounsley S.D."/>
            <person name="Shea T.P."/>
            <person name="Benito M.-I."/>
            <person name="Town C.D."/>
            <person name="Fujii C.Y."/>
            <person name="Mason T.M."/>
            <person name="Bowman C.L."/>
            <person name="Barnstead M.E."/>
            <person name="Feldblyum T.V."/>
            <person name="Buell C.R."/>
            <person name="Ketchum K.A."/>
            <person name="Lee J.J."/>
            <person name="Ronning C.M."/>
            <person name="Koo H.L."/>
            <person name="Moffat K.S."/>
            <person name="Cronin L.A."/>
            <person name="Shen M."/>
            <person name="Pai G."/>
            <person name="Van Aken S."/>
            <person name="Umayam L."/>
            <person name="Tallon L.J."/>
            <person name="Gill J.E."/>
            <person name="Adams M.D."/>
            <person name="Carrera A.J."/>
            <person name="Creasy T.H."/>
            <person name="Goodman H.M."/>
            <person name="Somerville C.R."/>
            <person name="Copenhaver G.P."/>
            <person name="Preuss D."/>
            <person name="Nierman W.C."/>
            <person name="White O."/>
            <person name="Eisen J.A."/>
            <person name="Salzberg S.L."/>
            <person name="Fraser C.M."/>
            <person name="Venter J.C."/>
        </authorList>
    </citation>
    <scope>NUCLEOTIDE SEQUENCE [LARGE SCALE GENOMIC DNA]</scope>
    <source>
        <strain>cv. Columbia</strain>
    </source>
</reference>
<reference key="3">
    <citation type="journal article" date="2017" name="Plant J.">
        <title>Araport11: a complete reannotation of the Arabidopsis thaliana reference genome.</title>
        <authorList>
            <person name="Cheng C.Y."/>
            <person name="Krishnakumar V."/>
            <person name="Chan A.P."/>
            <person name="Thibaud-Nissen F."/>
            <person name="Schobel S."/>
            <person name="Town C.D."/>
        </authorList>
    </citation>
    <scope>GENOME REANNOTATION</scope>
    <source>
        <strain>cv. Columbia</strain>
    </source>
</reference>
<reference key="4">
    <citation type="journal article" date="2006" name="Plant Biotechnol. J.">
        <title>Simultaneous high-throughput recombinational cloning of open reading frames in closed and open configurations.</title>
        <authorList>
            <person name="Underwood B.A."/>
            <person name="Vanderhaeghen R."/>
            <person name="Whitford R."/>
            <person name="Town C.D."/>
            <person name="Hilson P."/>
        </authorList>
    </citation>
    <scope>NUCLEOTIDE SEQUENCE [LARGE SCALE MRNA]</scope>
    <source>
        <strain>cv. Columbia</strain>
    </source>
</reference>
<reference key="5">
    <citation type="journal article" date="2002" name="Mol. Biol. Evol.">
        <title>Comparative genomics of the RBR family, including the Parkinson's disease-related gene parkin and the genes of the ariadne subfamily.</title>
        <authorList>
            <person name="Marin I."/>
            <person name="Ferrus A."/>
        </authorList>
    </citation>
    <scope>FUNCTION</scope>
</reference>
<sequence length="514" mass="59448">MDYSDDDMIDNESGEENNSDGGGNESYNYNAAVDTIILSEKSYVIIKEEEILKLQRDDIERVSTILFLSQVEAIVLLLHYHWCVSKLEDEWFTDEERIRKTVGILKEPVVDVNGTEVDIQCGICFESYTRKEIASVSCGHPYCKTCWTGYITTKIEDGPGCLRVKCPEPSCYAVVGQDMIDEVTEKKDKDKYYRYFLRSYVEDGKKMKWCPSPGCECAVEFGESSGYDVACLCSYRFCWNCSEDAHSPVDCETVSKWIFKNQDESENKNWILANSKPCPKCKRPIEKSHGCNHMTCSASCGHRFCWICGKSYSDHYACNNYVEDADHDKRTLLQSEIKRYTHYYVRWVENQSSRLKAMSDLEKFQSVQLKQLSDNQCKPKIDLQFIVDAWLQIIECRRVLKWTYAYGYYLDNLAKRPLFEYLQGEAETGLERLHHCAENELKQFFIKSEDPSDTFNAFRMKLTGLTKVTKTYFDNLVKALENGLADVTKSSEESADFLETQKLYDAYISEGCFF</sequence>
<feature type="chain" id="PRO_0000356203" description="Probable E3 ubiquitin-protein ligase ARI10">
    <location>
        <begin position="1"/>
        <end position="514"/>
    </location>
</feature>
<feature type="zinc finger region" description="RING-type 1" evidence="3">
    <location>
        <begin position="121"/>
        <end position="171"/>
    </location>
</feature>
<feature type="zinc finger region" description="IBR-type" evidence="3">
    <location>
        <begin position="190"/>
        <end position="251"/>
    </location>
</feature>
<feature type="zinc finger region" description="RING-type 2; atypical" evidence="3">
    <location>
        <begin position="278"/>
        <end position="308"/>
    </location>
</feature>
<feature type="region of interest" description="Disordered" evidence="4">
    <location>
        <begin position="1"/>
        <end position="26"/>
    </location>
</feature>
<feature type="region of interest" description="TRIAD supradomain" evidence="3">
    <location>
        <begin position="117"/>
        <end position="322"/>
    </location>
</feature>
<feature type="compositionally biased region" description="Acidic residues" evidence="4">
    <location>
        <begin position="1"/>
        <end position="18"/>
    </location>
</feature>
<feature type="active site" evidence="3">
    <location>
        <position position="291"/>
    </location>
</feature>
<feature type="binding site" evidence="3">
    <location>
        <position position="121"/>
    </location>
    <ligand>
        <name>Zn(2+)</name>
        <dbReference type="ChEBI" id="CHEBI:29105"/>
        <label>1</label>
    </ligand>
</feature>
<feature type="binding site" evidence="3">
    <location>
        <position position="124"/>
    </location>
    <ligand>
        <name>Zn(2+)</name>
        <dbReference type="ChEBI" id="CHEBI:29105"/>
        <label>1</label>
    </ligand>
</feature>
<feature type="binding site" evidence="3">
    <location>
        <position position="138"/>
    </location>
    <ligand>
        <name>Zn(2+)</name>
        <dbReference type="ChEBI" id="CHEBI:29105"/>
        <label>2</label>
    </ligand>
</feature>
<feature type="binding site" evidence="3">
    <location>
        <position position="140"/>
    </location>
    <ligand>
        <name>Zn(2+)</name>
        <dbReference type="ChEBI" id="CHEBI:29105"/>
        <label>2</label>
    </ligand>
</feature>
<feature type="binding site" evidence="3">
    <location>
        <position position="143"/>
    </location>
    <ligand>
        <name>Zn(2+)</name>
        <dbReference type="ChEBI" id="CHEBI:29105"/>
        <label>1</label>
    </ligand>
</feature>
<feature type="binding site" evidence="3">
    <location>
        <position position="146"/>
    </location>
    <ligand>
        <name>Zn(2+)</name>
        <dbReference type="ChEBI" id="CHEBI:29105"/>
        <label>1</label>
    </ligand>
</feature>
<feature type="binding site" evidence="3">
    <location>
        <position position="166"/>
    </location>
    <ligand>
        <name>Zn(2+)</name>
        <dbReference type="ChEBI" id="CHEBI:29105"/>
        <label>2</label>
    </ligand>
</feature>
<feature type="binding site" evidence="3">
    <location>
        <position position="171"/>
    </location>
    <ligand>
        <name>Zn(2+)</name>
        <dbReference type="ChEBI" id="CHEBI:29105"/>
        <label>2</label>
    </ligand>
</feature>
<feature type="binding site" evidence="3">
    <location>
        <position position="210"/>
    </location>
    <ligand>
        <name>Zn(2+)</name>
        <dbReference type="ChEBI" id="CHEBI:29105"/>
        <label>3</label>
    </ligand>
</feature>
<feature type="binding site" evidence="3">
    <location>
        <position position="215"/>
    </location>
    <ligand>
        <name>Zn(2+)</name>
        <dbReference type="ChEBI" id="CHEBI:29105"/>
        <label>3</label>
    </ligand>
</feature>
<feature type="binding site" evidence="3">
    <location>
        <position position="231"/>
    </location>
    <ligand>
        <name>Zn(2+)</name>
        <dbReference type="ChEBI" id="CHEBI:29105"/>
        <label>3</label>
    </ligand>
</feature>
<feature type="binding site" evidence="3">
    <location>
        <position position="233"/>
    </location>
    <ligand>
        <name>Zn(2+)</name>
        <dbReference type="ChEBI" id="CHEBI:29105"/>
        <label>3</label>
    </ligand>
</feature>
<feature type="binding site" evidence="3">
    <location>
        <position position="238"/>
    </location>
    <ligand>
        <name>Zn(2+)</name>
        <dbReference type="ChEBI" id="CHEBI:29105"/>
        <label>4</label>
    </ligand>
</feature>
<feature type="binding site" evidence="3">
    <location>
        <position position="241"/>
    </location>
    <ligand>
        <name>Zn(2+)</name>
        <dbReference type="ChEBI" id="CHEBI:29105"/>
        <label>4</label>
    </ligand>
</feature>
<feature type="binding site" evidence="3">
    <location>
        <position position="246"/>
    </location>
    <ligand>
        <name>Zn(2+)</name>
        <dbReference type="ChEBI" id="CHEBI:29105"/>
        <label>4</label>
    </ligand>
</feature>
<feature type="binding site" evidence="3">
    <location>
        <position position="251"/>
    </location>
    <ligand>
        <name>Zn(2+)</name>
        <dbReference type="ChEBI" id="CHEBI:29105"/>
        <label>4</label>
    </ligand>
</feature>
<feature type="binding site" evidence="3">
    <location>
        <position position="278"/>
    </location>
    <ligand>
        <name>Zn(2+)</name>
        <dbReference type="ChEBI" id="CHEBI:29105"/>
        <label>5</label>
    </ligand>
</feature>
<feature type="binding site" evidence="3">
    <location>
        <position position="281"/>
    </location>
    <ligand>
        <name>Zn(2+)</name>
        <dbReference type="ChEBI" id="CHEBI:29105"/>
        <label>5</label>
    </ligand>
</feature>
<feature type="binding site" evidence="3">
    <location>
        <position position="296"/>
    </location>
    <ligand>
        <name>Zn(2+)</name>
        <dbReference type="ChEBI" id="CHEBI:29105"/>
        <label>5</label>
    </ligand>
</feature>
<feature type="binding site" evidence="3">
    <location>
        <position position="300"/>
    </location>
    <ligand>
        <name>Zn(2+)</name>
        <dbReference type="ChEBI" id="CHEBI:29105"/>
        <label>5</label>
    </ligand>
</feature>
<feature type="binding site" evidence="3">
    <location>
        <position position="305"/>
    </location>
    <ligand>
        <name>Zn(2+)</name>
        <dbReference type="ChEBI" id="CHEBI:29105"/>
        <label>6</label>
    </ligand>
</feature>
<feature type="binding site" evidence="3">
    <location>
        <position position="308"/>
    </location>
    <ligand>
        <name>Zn(2+)</name>
        <dbReference type="ChEBI" id="CHEBI:29105"/>
        <label>6</label>
    </ligand>
</feature>
<feature type="binding site" evidence="3">
    <location>
        <position position="315"/>
    </location>
    <ligand>
        <name>Zn(2+)</name>
        <dbReference type="ChEBI" id="CHEBI:29105"/>
        <label>6</label>
    </ligand>
</feature>
<feature type="binding site" evidence="3">
    <location>
        <position position="318"/>
    </location>
    <ligand>
        <name>Zn(2+)</name>
        <dbReference type="ChEBI" id="CHEBI:29105"/>
        <label>6</label>
    </ligand>
</feature>
<gene>
    <name type="primary">ARI10</name>
    <name type="ordered locus">At2g31760</name>
    <name type="ORF">F20M17.20</name>
</gene>
<comment type="function">
    <text evidence="1 5">Might act as an E3 ubiquitin-protein ligase, or as part of E3 complex, which accepts ubiquitin from specific E2 ubiquitin-conjugating enzymes and then transfers it to substrates.</text>
</comment>
<comment type="catalytic activity">
    <reaction evidence="2">
        <text>[E2 ubiquitin-conjugating enzyme]-S-ubiquitinyl-L-cysteine + [acceptor protein]-L-lysine = [E2 ubiquitin-conjugating enzyme]-L-cysteine + [acceptor protein]-N(6)-ubiquitinyl-L-lysine.</text>
        <dbReference type="EC" id="2.3.2.31"/>
    </reaction>
</comment>
<comment type="cofactor">
    <cofactor evidence="6">
        <name>Zn(2+)</name>
        <dbReference type="ChEBI" id="CHEBI:29105"/>
    </cofactor>
    <text evidence="6">Binds 4 Zn(2+) ions per subunit.</text>
</comment>
<comment type="pathway">
    <text>Protein modification; protein ubiquitination.</text>
</comment>
<comment type="domain">
    <text evidence="2">Members of the RBR family are atypical E3 ligases. They interact with the E2 conjugating enzyme UBE2L3 and function like HECT-type E3 enzymes: they bind E2s via the first RING-type zinc finger, but require an obligate trans-thiolation step during the ubiquitin transfer, requiring a conserved active site Cys residue in the second RING-type zinc finger. The active site probably forms a thioester intermediate with ubiquitin taken from the active-site cysteine of the E2 before ultimately transferring it to a Lys residue on the substrate.</text>
</comment>
<comment type="similarity">
    <text evidence="6">Belongs to the RBR family. Ariadne subfamily.</text>
</comment>
<keyword id="KW-0479">Metal-binding</keyword>
<keyword id="KW-1185">Reference proteome</keyword>
<keyword id="KW-0677">Repeat</keyword>
<keyword id="KW-0808">Transferase</keyword>
<keyword id="KW-0833">Ubl conjugation pathway</keyword>
<keyword id="KW-0862">Zinc</keyword>
<keyword id="KW-0863">Zinc-finger</keyword>
<organism>
    <name type="scientific">Arabidopsis thaliana</name>
    <name type="common">Mouse-ear cress</name>
    <dbReference type="NCBI Taxonomy" id="3702"/>
    <lineage>
        <taxon>Eukaryota</taxon>
        <taxon>Viridiplantae</taxon>
        <taxon>Streptophyta</taxon>
        <taxon>Embryophyta</taxon>
        <taxon>Tracheophyta</taxon>
        <taxon>Spermatophyta</taxon>
        <taxon>Magnoliopsida</taxon>
        <taxon>eudicotyledons</taxon>
        <taxon>Gunneridae</taxon>
        <taxon>Pentapetalae</taxon>
        <taxon>rosids</taxon>
        <taxon>malvids</taxon>
        <taxon>Brassicales</taxon>
        <taxon>Brassicaceae</taxon>
        <taxon>Camelineae</taxon>
        <taxon>Arabidopsis</taxon>
    </lineage>
</organism>
<evidence type="ECO:0000250" key="1"/>
<evidence type="ECO:0000250" key="2">
    <source>
        <dbReference type="UniProtKB" id="Q9Y4X5"/>
    </source>
</evidence>
<evidence type="ECO:0000255" key="3">
    <source>
        <dbReference type="PROSITE-ProRule" id="PRU01221"/>
    </source>
</evidence>
<evidence type="ECO:0000256" key="4">
    <source>
        <dbReference type="SAM" id="MobiDB-lite"/>
    </source>
</evidence>
<evidence type="ECO:0000269" key="5">
    <source>
    </source>
</evidence>
<evidence type="ECO:0000305" key="6"/>
<dbReference type="EC" id="2.3.2.31" evidence="2"/>
<dbReference type="EMBL" id="AJ510213">
    <property type="protein sequence ID" value="CAD52892.1"/>
    <property type="molecule type" value="Genomic_DNA"/>
</dbReference>
<dbReference type="EMBL" id="AC006533">
    <property type="protein sequence ID" value="AAD32296.1"/>
    <property type="molecule type" value="Genomic_DNA"/>
</dbReference>
<dbReference type="EMBL" id="CP002685">
    <property type="protein sequence ID" value="AEC08581.1"/>
    <property type="molecule type" value="Genomic_DNA"/>
</dbReference>
<dbReference type="EMBL" id="DQ056560">
    <property type="protein sequence ID" value="AAY78710.1"/>
    <property type="molecule type" value="mRNA"/>
</dbReference>
<dbReference type="PIR" id="G84724">
    <property type="entry name" value="G84724"/>
</dbReference>
<dbReference type="RefSeq" id="NP_180735.1">
    <property type="nucleotide sequence ID" value="NM_128734.1"/>
</dbReference>
<dbReference type="SMR" id="Q9SKC4"/>
<dbReference type="FunCoup" id="Q9SKC4">
    <property type="interactions" value="107"/>
</dbReference>
<dbReference type="STRING" id="3702.Q9SKC4"/>
<dbReference type="PaxDb" id="3702-AT2G31760.1"/>
<dbReference type="EnsemblPlants" id="AT2G31760.1">
    <property type="protein sequence ID" value="AT2G31760.1"/>
    <property type="gene ID" value="AT2G31760"/>
</dbReference>
<dbReference type="GeneID" id="817733"/>
<dbReference type="Gramene" id="AT2G31760.1">
    <property type="protein sequence ID" value="AT2G31760.1"/>
    <property type="gene ID" value="AT2G31760"/>
</dbReference>
<dbReference type="KEGG" id="ath:AT2G31760"/>
<dbReference type="Araport" id="AT2G31760"/>
<dbReference type="TAIR" id="AT2G31760">
    <property type="gene designation" value="ARI10"/>
</dbReference>
<dbReference type="eggNOG" id="KOG1815">
    <property type="taxonomic scope" value="Eukaryota"/>
</dbReference>
<dbReference type="HOGENOM" id="CLU_009823_3_1_1"/>
<dbReference type="InParanoid" id="Q9SKC4"/>
<dbReference type="OMA" id="WICLRAY"/>
<dbReference type="OrthoDB" id="10009520at2759"/>
<dbReference type="PhylomeDB" id="Q9SKC4"/>
<dbReference type="UniPathway" id="UPA00143"/>
<dbReference type="PRO" id="PR:Q9SKC4"/>
<dbReference type="Proteomes" id="UP000006548">
    <property type="component" value="Chromosome 2"/>
</dbReference>
<dbReference type="ExpressionAtlas" id="Q9SKC4">
    <property type="expression patterns" value="baseline"/>
</dbReference>
<dbReference type="GO" id="GO:0004842">
    <property type="term" value="F:ubiquitin-protein transferase activity"/>
    <property type="evidence" value="ECO:0007669"/>
    <property type="project" value="InterPro"/>
</dbReference>
<dbReference type="GO" id="GO:0008270">
    <property type="term" value="F:zinc ion binding"/>
    <property type="evidence" value="ECO:0007669"/>
    <property type="project" value="UniProtKB-KW"/>
</dbReference>
<dbReference type="GO" id="GO:0016567">
    <property type="term" value="P:protein ubiquitination"/>
    <property type="evidence" value="ECO:0007669"/>
    <property type="project" value="UniProtKB-UniPathway"/>
</dbReference>
<dbReference type="CDD" id="cd20346">
    <property type="entry name" value="BRcat_RBR_ANKIB1"/>
    <property type="match status" value="1"/>
</dbReference>
<dbReference type="CDD" id="cd23141">
    <property type="entry name" value="RING-HC_ARI6-like"/>
    <property type="match status" value="1"/>
</dbReference>
<dbReference type="FunFam" id="1.20.120.1750:FF:000027">
    <property type="entry name" value="RBR-type E3 ubiquitin transferase"/>
    <property type="match status" value="1"/>
</dbReference>
<dbReference type="FunFam" id="3.30.40.10:FF:000019">
    <property type="entry name" value="RBR-type E3 ubiquitin transferase"/>
    <property type="match status" value="1"/>
</dbReference>
<dbReference type="Gene3D" id="1.20.120.1750">
    <property type="match status" value="1"/>
</dbReference>
<dbReference type="Gene3D" id="3.30.40.10">
    <property type="entry name" value="Zinc/RING finger domain, C3HC4 (zinc finger)"/>
    <property type="match status" value="1"/>
</dbReference>
<dbReference type="InterPro" id="IPR045840">
    <property type="entry name" value="Ariadne"/>
</dbReference>
<dbReference type="InterPro" id="IPR031127">
    <property type="entry name" value="E3_UB_ligase_RBR"/>
</dbReference>
<dbReference type="InterPro" id="IPR002867">
    <property type="entry name" value="IBR_dom"/>
</dbReference>
<dbReference type="InterPro" id="IPR044066">
    <property type="entry name" value="TRIAD_supradom"/>
</dbReference>
<dbReference type="InterPro" id="IPR001841">
    <property type="entry name" value="Znf_RING"/>
</dbReference>
<dbReference type="InterPro" id="IPR013083">
    <property type="entry name" value="Znf_RING/FYVE/PHD"/>
</dbReference>
<dbReference type="PANTHER" id="PTHR11685">
    <property type="entry name" value="RBR FAMILY RING FINGER AND IBR DOMAIN-CONTAINING"/>
    <property type="match status" value="1"/>
</dbReference>
<dbReference type="Pfam" id="PF19422">
    <property type="entry name" value="Ariadne"/>
    <property type="match status" value="1"/>
</dbReference>
<dbReference type="Pfam" id="PF01485">
    <property type="entry name" value="IBR"/>
    <property type="match status" value="1"/>
</dbReference>
<dbReference type="Pfam" id="PF22191">
    <property type="entry name" value="IBR_1"/>
    <property type="match status" value="1"/>
</dbReference>
<dbReference type="SMART" id="SM00647">
    <property type="entry name" value="IBR"/>
    <property type="match status" value="2"/>
</dbReference>
<dbReference type="SUPFAM" id="SSF57850">
    <property type="entry name" value="RING/U-box"/>
    <property type="match status" value="3"/>
</dbReference>
<dbReference type="PROSITE" id="PS51873">
    <property type="entry name" value="TRIAD"/>
    <property type="match status" value="1"/>
</dbReference>
<dbReference type="PROSITE" id="PS50089">
    <property type="entry name" value="ZF_RING_2"/>
    <property type="match status" value="1"/>
</dbReference>
<protein>
    <recommendedName>
        <fullName>Probable E3 ubiquitin-protein ligase ARI10</fullName>
        <ecNumber evidence="2">2.3.2.31</ecNumber>
    </recommendedName>
    <alternativeName>
        <fullName>ARIADNE-like protein ARI10</fullName>
    </alternativeName>
    <alternativeName>
        <fullName>Protein ariadne homolog 10</fullName>
    </alternativeName>
    <alternativeName>
        <fullName evidence="6">RING-type E3 ubiquitin transferase ARI10</fullName>
    </alternativeName>
</protein>
<accession>Q9SKC4</accession>
<name>ARI10_ARATH</name>